<accession>C6E2U6</accession>
<sequence length="75" mass="8499">MAVEKFETALKKLEDVVKKLEGGELSLEESLKAFEEGVKFSAFCSKKLNEAERRVETLVKQRDGSFVTKPFEGEE</sequence>
<feature type="chain" id="PRO_1000205224" description="Exodeoxyribonuclease 7 small subunit">
    <location>
        <begin position="1"/>
        <end position="75"/>
    </location>
</feature>
<dbReference type="EC" id="3.1.11.6" evidence="1"/>
<dbReference type="EMBL" id="CP001661">
    <property type="protein sequence ID" value="ACT19056.1"/>
    <property type="molecule type" value="Genomic_DNA"/>
</dbReference>
<dbReference type="SMR" id="C6E2U6"/>
<dbReference type="STRING" id="443144.GM21_3027"/>
<dbReference type="KEGG" id="gem:GM21_3027"/>
<dbReference type="eggNOG" id="COG1722">
    <property type="taxonomic scope" value="Bacteria"/>
</dbReference>
<dbReference type="HOGENOM" id="CLU_145918_3_3_7"/>
<dbReference type="OrthoDB" id="5523157at2"/>
<dbReference type="GO" id="GO:0005829">
    <property type="term" value="C:cytosol"/>
    <property type="evidence" value="ECO:0007669"/>
    <property type="project" value="TreeGrafter"/>
</dbReference>
<dbReference type="GO" id="GO:0009318">
    <property type="term" value="C:exodeoxyribonuclease VII complex"/>
    <property type="evidence" value="ECO:0007669"/>
    <property type="project" value="InterPro"/>
</dbReference>
<dbReference type="GO" id="GO:0008855">
    <property type="term" value="F:exodeoxyribonuclease VII activity"/>
    <property type="evidence" value="ECO:0007669"/>
    <property type="project" value="UniProtKB-UniRule"/>
</dbReference>
<dbReference type="GO" id="GO:0006308">
    <property type="term" value="P:DNA catabolic process"/>
    <property type="evidence" value="ECO:0007669"/>
    <property type="project" value="UniProtKB-UniRule"/>
</dbReference>
<dbReference type="Gene3D" id="1.10.287.1040">
    <property type="entry name" value="Exonuclease VII, small subunit"/>
    <property type="match status" value="1"/>
</dbReference>
<dbReference type="HAMAP" id="MF_00337">
    <property type="entry name" value="Exonuc_7_S"/>
    <property type="match status" value="1"/>
</dbReference>
<dbReference type="InterPro" id="IPR003761">
    <property type="entry name" value="Exonuc_VII_S"/>
</dbReference>
<dbReference type="InterPro" id="IPR037004">
    <property type="entry name" value="Exonuc_VII_ssu_sf"/>
</dbReference>
<dbReference type="NCBIfam" id="NF002140">
    <property type="entry name" value="PRK00977.1-4"/>
    <property type="match status" value="1"/>
</dbReference>
<dbReference type="NCBIfam" id="NF010669">
    <property type="entry name" value="PRK14066.1"/>
    <property type="match status" value="1"/>
</dbReference>
<dbReference type="NCBIfam" id="TIGR01280">
    <property type="entry name" value="xseB"/>
    <property type="match status" value="1"/>
</dbReference>
<dbReference type="PANTHER" id="PTHR34137">
    <property type="entry name" value="EXODEOXYRIBONUCLEASE 7 SMALL SUBUNIT"/>
    <property type="match status" value="1"/>
</dbReference>
<dbReference type="PANTHER" id="PTHR34137:SF1">
    <property type="entry name" value="EXODEOXYRIBONUCLEASE 7 SMALL SUBUNIT"/>
    <property type="match status" value="1"/>
</dbReference>
<dbReference type="Pfam" id="PF02609">
    <property type="entry name" value="Exonuc_VII_S"/>
    <property type="match status" value="1"/>
</dbReference>
<dbReference type="PIRSF" id="PIRSF006488">
    <property type="entry name" value="Exonuc_VII_S"/>
    <property type="match status" value="1"/>
</dbReference>
<dbReference type="SUPFAM" id="SSF116842">
    <property type="entry name" value="XseB-like"/>
    <property type="match status" value="1"/>
</dbReference>
<reference key="1">
    <citation type="submission" date="2009-07" db="EMBL/GenBank/DDBJ databases">
        <title>Complete sequence of Geobacter sp. M21.</title>
        <authorList>
            <consortium name="US DOE Joint Genome Institute"/>
            <person name="Lucas S."/>
            <person name="Copeland A."/>
            <person name="Lapidus A."/>
            <person name="Glavina del Rio T."/>
            <person name="Dalin E."/>
            <person name="Tice H."/>
            <person name="Bruce D."/>
            <person name="Goodwin L."/>
            <person name="Pitluck S."/>
            <person name="Saunders E."/>
            <person name="Brettin T."/>
            <person name="Detter J.C."/>
            <person name="Han C."/>
            <person name="Larimer F."/>
            <person name="Land M."/>
            <person name="Hauser L."/>
            <person name="Kyrpides N."/>
            <person name="Ovchinnikova G."/>
            <person name="Lovley D."/>
        </authorList>
    </citation>
    <scope>NUCLEOTIDE SEQUENCE [LARGE SCALE GENOMIC DNA]</scope>
    <source>
        <strain>M21</strain>
    </source>
</reference>
<proteinExistence type="inferred from homology"/>
<keyword id="KW-0963">Cytoplasm</keyword>
<keyword id="KW-0269">Exonuclease</keyword>
<keyword id="KW-0378">Hydrolase</keyword>
<keyword id="KW-0540">Nuclease</keyword>
<organism>
    <name type="scientific">Geobacter sp. (strain M21)</name>
    <dbReference type="NCBI Taxonomy" id="443144"/>
    <lineage>
        <taxon>Bacteria</taxon>
        <taxon>Pseudomonadati</taxon>
        <taxon>Thermodesulfobacteriota</taxon>
        <taxon>Desulfuromonadia</taxon>
        <taxon>Geobacterales</taxon>
        <taxon>Geobacteraceae</taxon>
        <taxon>Geobacter</taxon>
    </lineage>
</organism>
<evidence type="ECO:0000255" key="1">
    <source>
        <dbReference type="HAMAP-Rule" id="MF_00337"/>
    </source>
</evidence>
<name>EX7S_GEOSM</name>
<comment type="function">
    <text evidence="1">Bidirectionally degrades single-stranded DNA into large acid-insoluble oligonucleotides, which are then degraded further into small acid-soluble oligonucleotides.</text>
</comment>
<comment type="catalytic activity">
    <reaction evidence="1">
        <text>Exonucleolytic cleavage in either 5'- to 3'- or 3'- to 5'-direction to yield nucleoside 5'-phosphates.</text>
        <dbReference type="EC" id="3.1.11.6"/>
    </reaction>
</comment>
<comment type="subunit">
    <text evidence="1">Heterooligomer composed of large and small subunits.</text>
</comment>
<comment type="subcellular location">
    <subcellularLocation>
        <location evidence="1">Cytoplasm</location>
    </subcellularLocation>
</comment>
<comment type="similarity">
    <text evidence="1">Belongs to the XseB family.</text>
</comment>
<gene>
    <name evidence="1" type="primary">xseB</name>
    <name type="ordered locus">GM21_3027</name>
</gene>
<protein>
    <recommendedName>
        <fullName evidence="1">Exodeoxyribonuclease 7 small subunit</fullName>
        <ecNumber evidence="1">3.1.11.6</ecNumber>
    </recommendedName>
    <alternativeName>
        <fullName evidence="1">Exodeoxyribonuclease VII small subunit</fullName>
        <shortName evidence="1">Exonuclease VII small subunit</shortName>
    </alternativeName>
</protein>